<gene>
    <name evidence="2" type="primary">pk</name>
    <name type="ORF">AAEL006891</name>
</gene>
<organism>
    <name type="scientific">Aedes aegypti</name>
    <name type="common">Yellowfever mosquito</name>
    <name type="synonym">Culex aegypti</name>
    <dbReference type="NCBI Taxonomy" id="7159"/>
    <lineage>
        <taxon>Eukaryota</taxon>
        <taxon>Metazoa</taxon>
        <taxon>Ecdysozoa</taxon>
        <taxon>Arthropoda</taxon>
        <taxon>Hexapoda</taxon>
        <taxon>Insecta</taxon>
        <taxon>Pterygota</taxon>
        <taxon>Neoptera</taxon>
        <taxon>Endopterygota</taxon>
        <taxon>Diptera</taxon>
        <taxon>Nematocera</taxon>
        <taxon>Culicoidea</taxon>
        <taxon>Culicidae</taxon>
        <taxon>Culicinae</taxon>
        <taxon>Aedini</taxon>
        <taxon>Aedes</taxon>
        <taxon>Stegomyia</taxon>
    </lineage>
</organism>
<comment type="function">
    <text evidence="2">Acts in a planar cell polarity (PCP) complex; polarization along the apical/basal axis of epithelial cells. PCP signaling in the wing disk requires the receptor fz and the cytoplasmic proteins dsh and pk. These act in a feedback loop leading to activation of the jnk cascade and subsequent polarized arrangement of hairs and bristles. Dgo and pk compete with one another for dsh binding, thereby modulating fz dsh activity and ensuring tight control over fz PCP signaling. Vang, stan and pk function together to regulate the establishment of tissue polarity in the adult eye (By similarity).</text>
</comment>
<comment type="subunit">
    <text evidence="2">Interacts with dsh; PET and LIM domains interact with dsh DEP domain, in wing cells. Interacts with Vang in photoreceptor cells (By similarity).</text>
</comment>
<comment type="subcellular location">
    <subcellularLocation>
        <location evidence="1">Cell membrane</location>
        <topology evidence="1">Peripheral membrane protein</topology>
        <orientation evidence="1">Cytoplasmic side</orientation>
    </subcellularLocation>
</comment>
<comment type="similarity">
    <text evidence="6">Belongs to the prickle / espinas / testin family.</text>
</comment>
<name>PRIC1_AEDAE</name>
<feature type="chain" id="PRO_0000288832" description="Protein prickle">
    <location>
        <begin position="1"/>
        <end position="916"/>
    </location>
</feature>
<feature type="domain" description="PET" evidence="4">
    <location>
        <begin position="167"/>
        <end position="275"/>
    </location>
</feature>
<feature type="domain" description="LIM zinc-binding 1" evidence="3">
    <location>
        <begin position="274"/>
        <end position="338"/>
    </location>
</feature>
<feature type="domain" description="LIM zinc-binding 2" evidence="3">
    <location>
        <begin position="339"/>
        <end position="399"/>
    </location>
</feature>
<feature type="domain" description="LIM zinc-binding 3" evidence="3">
    <location>
        <begin position="400"/>
        <end position="462"/>
    </location>
</feature>
<feature type="region of interest" description="Disordered" evidence="5">
    <location>
        <begin position="49"/>
        <end position="105"/>
    </location>
</feature>
<feature type="region of interest" description="Disordered" evidence="5">
    <location>
        <begin position="127"/>
        <end position="176"/>
    </location>
</feature>
<feature type="region of interest" description="Disordered" evidence="5">
    <location>
        <begin position="460"/>
        <end position="593"/>
    </location>
</feature>
<feature type="region of interest" description="Disordered" evidence="5">
    <location>
        <begin position="635"/>
        <end position="671"/>
    </location>
</feature>
<feature type="region of interest" description="Disordered" evidence="5">
    <location>
        <begin position="692"/>
        <end position="725"/>
    </location>
</feature>
<feature type="region of interest" description="Disordered" evidence="5">
    <location>
        <begin position="763"/>
        <end position="870"/>
    </location>
</feature>
<feature type="compositionally biased region" description="Low complexity" evidence="5">
    <location>
        <begin position="145"/>
        <end position="156"/>
    </location>
</feature>
<feature type="compositionally biased region" description="Gly residues" evidence="5">
    <location>
        <begin position="157"/>
        <end position="171"/>
    </location>
</feature>
<feature type="compositionally biased region" description="Polar residues" evidence="5">
    <location>
        <begin position="507"/>
        <end position="517"/>
    </location>
</feature>
<feature type="compositionally biased region" description="Polar residues" evidence="5">
    <location>
        <begin position="526"/>
        <end position="569"/>
    </location>
</feature>
<feature type="compositionally biased region" description="Polar residues" evidence="5">
    <location>
        <begin position="642"/>
        <end position="654"/>
    </location>
</feature>
<feature type="compositionally biased region" description="Low complexity" evidence="5">
    <location>
        <begin position="655"/>
        <end position="671"/>
    </location>
</feature>
<feature type="compositionally biased region" description="Basic residues" evidence="5">
    <location>
        <begin position="777"/>
        <end position="793"/>
    </location>
</feature>
<feature type="compositionally biased region" description="Low complexity" evidence="5">
    <location>
        <begin position="796"/>
        <end position="805"/>
    </location>
</feature>
<feature type="compositionally biased region" description="Basic and acidic residues" evidence="5">
    <location>
        <begin position="829"/>
        <end position="844"/>
    </location>
</feature>
<feature type="compositionally biased region" description="Low complexity" evidence="5">
    <location>
        <begin position="852"/>
        <end position="867"/>
    </location>
</feature>
<sequence length="916" mass="101773">MAKNVRFSINMFGVMSPMIPPPRHHPVAPMSYPYQKPSSFEYDQLNRVPLSPHHHQQPPYPKPPLQHPSASPIHHQPPPPQHSPSVGDFLPPLQPQPHQDAAGGSRSIYSAHALSQAATNLHPQHLQHLQHGPFSQQPPPPPMGSSPSPALSSSITTGGGGVTRGGGGGGHIIPVDDDSGCALEEYTWVPPGLRPDQVHLYFSAIPEDKVPYVNSIGERHRVRQLLQQLPPHDNEVRYCHSLTDEERKELKLFSAQRKREALGRGTVKQLATNQICDGCGECISSGDMGVYASRFDPGTCWHPACFVCSVCKELLVDLIYFHREARLYCGRHHAETLKPRCSACDEIILADECTEAEGRAWHIKHFACFECDKQLGGQRYIMRDGKPYCLHCFDAMFAEYCDFCSEPIGVDQGQMSHDGQHWHATDSCFACSTCRCSLLGRPFLPRRGEIYCSIACSKGEPPTPSDGSVPTVLPSRTRLRAPGQRNFDDPSAEYVPNLPKSPEPLQSPISERSTPHSSPAKHSHTEMSTNISSPVPTEFNDQTYSVSADNDVQTYTGSGATSPISSRTLPCTEPSDQTDHQHQSLPPLLPNHRRIPQCSPELDRLLHKDRSRQPLDLTDLSLSLDNWQADHNSTVIPGPSIAKTNPALTSSMPELSQSLQQQQQQQQQPQSLLAYDDISPLDKASAITDPDDAIQNASDDASHSIVELPTPPPIVSNTRDPENLPKMPLRRFQNSLPRNKFHKSSIIKKEVRFEGIFQDSLPRSKSYCTRSGGSRSRSSKSKRRSSHHHQHHRSSGESSSYSGTSYDRHHHSSSGSSSSNRRSPRRRRVPDVEFIEHQDHHRGDGDDDSDSRSVCSTCSSSSSSADDTVYELPMRRTYGGTRIHYMPNNSLACARKRKQLQNSHPYEKDNKNCIIS</sequence>
<dbReference type="EMBL" id="CH477410">
    <property type="protein sequence ID" value="EAT41476.1"/>
    <property type="molecule type" value="Genomic_DNA"/>
</dbReference>
<dbReference type="RefSeq" id="XP_001652308.1">
    <property type="nucleotide sequence ID" value="XM_001652258.1"/>
</dbReference>
<dbReference type="SMR" id="Q174I2"/>
<dbReference type="FunCoup" id="Q174I2">
    <property type="interactions" value="101"/>
</dbReference>
<dbReference type="STRING" id="7159.Q174I2"/>
<dbReference type="PaxDb" id="7159-AAEL006891-PA"/>
<dbReference type="VEuPathDB" id="VectorBase:AAEL022496"/>
<dbReference type="eggNOG" id="KOG1704">
    <property type="taxonomic scope" value="Eukaryota"/>
</dbReference>
<dbReference type="HOGENOM" id="CLU_008937_4_1_1"/>
<dbReference type="InParanoid" id="Q174I2"/>
<dbReference type="OMA" id="HRENRLY"/>
<dbReference type="PhylomeDB" id="Q174I2"/>
<dbReference type="Proteomes" id="UP000008820">
    <property type="component" value="Unassembled WGS sequence"/>
</dbReference>
<dbReference type="Proteomes" id="UP000682892">
    <property type="component" value="Unassembled WGS sequence"/>
</dbReference>
<dbReference type="GO" id="GO:0005886">
    <property type="term" value="C:plasma membrane"/>
    <property type="evidence" value="ECO:0000250"/>
    <property type="project" value="UniProtKB"/>
</dbReference>
<dbReference type="GO" id="GO:0008270">
    <property type="term" value="F:zinc ion binding"/>
    <property type="evidence" value="ECO:0007669"/>
    <property type="project" value="InterPro"/>
</dbReference>
<dbReference type="GO" id="GO:0009948">
    <property type="term" value="P:anterior/posterior axis specification"/>
    <property type="evidence" value="ECO:0000250"/>
    <property type="project" value="UniProtKB"/>
</dbReference>
<dbReference type="GO" id="GO:0001736">
    <property type="term" value="P:establishment of planar polarity"/>
    <property type="evidence" value="ECO:0000250"/>
    <property type="project" value="UniProtKB"/>
</dbReference>
<dbReference type="GO" id="GO:0007164">
    <property type="term" value="P:establishment of tissue polarity"/>
    <property type="evidence" value="ECO:0000250"/>
    <property type="project" value="UniProtKB"/>
</dbReference>
<dbReference type="CDD" id="cd09415">
    <property type="entry name" value="LIM1_Prickle"/>
    <property type="match status" value="1"/>
</dbReference>
<dbReference type="CDD" id="cd09418">
    <property type="entry name" value="LIM2_Prickle"/>
    <property type="match status" value="1"/>
</dbReference>
<dbReference type="CDD" id="cd09420">
    <property type="entry name" value="LIM3_Prickle"/>
    <property type="match status" value="1"/>
</dbReference>
<dbReference type="CDD" id="cd09827">
    <property type="entry name" value="PET_Prickle"/>
    <property type="match status" value="1"/>
</dbReference>
<dbReference type="FunFam" id="2.10.110.10:FF:000035">
    <property type="entry name" value="prickle-like protein 2 isoform X1"/>
    <property type="match status" value="1"/>
</dbReference>
<dbReference type="FunFam" id="2.10.110.10:FF:000005">
    <property type="entry name" value="Testin isoform 1"/>
    <property type="match status" value="1"/>
</dbReference>
<dbReference type="Gene3D" id="2.10.110.10">
    <property type="entry name" value="Cysteine Rich Protein"/>
    <property type="match status" value="3"/>
</dbReference>
<dbReference type="InterPro" id="IPR033725">
    <property type="entry name" value="LIM1_prickle"/>
</dbReference>
<dbReference type="InterPro" id="IPR033726">
    <property type="entry name" value="LIM2_prickle"/>
</dbReference>
<dbReference type="InterPro" id="IPR033727">
    <property type="entry name" value="LIM3_prickle"/>
</dbReference>
<dbReference type="InterPro" id="IPR010442">
    <property type="entry name" value="PET_domain"/>
</dbReference>
<dbReference type="InterPro" id="IPR033723">
    <property type="entry name" value="PET_prickle"/>
</dbReference>
<dbReference type="InterPro" id="IPR047120">
    <property type="entry name" value="Pk/Esn/Tes"/>
</dbReference>
<dbReference type="InterPro" id="IPR001781">
    <property type="entry name" value="Znf_LIM"/>
</dbReference>
<dbReference type="PANTHER" id="PTHR24211">
    <property type="entry name" value="LIM DOMAIN-CONTAINING PROTEIN"/>
    <property type="match status" value="1"/>
</dbReference>
<dbReference type="PANTHER" id="PTHR24211:SF20">
    <property type="entry name" value="PROTEIN ESPINAS-RELATED"/>
    <property type="match status" value="1"/>
</dbReference>
<dbReference type="Pfam" id="PF00412">
    <property type="entry name" value="LIM"/>
    <property type="match status" value="3"/>
</dbReference>
<dbReference type="Pfam" id="PF06297">
    <property type="entry name" value="PET"/>
    <property type="match status" value="1"/>
</dbReference>
<dbReference type="SMART" id="SM00132">
    <property type="entry name" value="LIM"/>
    <property type="match status" value="3"/>
</dbReference>
<dbReference type="SUPFAM" id="SSF57716">
    <property type="entry name" value="Glucocorticoid receptor-like (DNA-binding domain)"/>
    <property type="match status" value="2"/>
</dbReference>
<dbReference type="PROSITE" id="PS00478">
    <property type="entry name" value="LIM_DOMAIN_1"/>
    <property type="match status" value="2"/>
</dbReference>
<dbReference type="PROSITE" id="PS50023">
    <property type="entry name" value="LIM_DOMAIN_2"/>
    <property type="match status" value="3"/>
</dbReference>
<dbReference type="PROSITE" id="PS51303">
    <property type="entry name" value="PET"/>
    <property type="match status" value="1"/>
</dbReference>
<reference key="1">
    <citation type="journal article" date="2007" name="Science">
        <title>Genome sequence of Aedes aegypti, a major arbovirus vector.</title>
        <authorList>
            <person name="Nene V."/>
            <person name="Wortman J.R."/>
            <person name="Lawson D."/>
            <person name="Haas B.J."/>
            <person name="Kodira C.D."/>
            <person name="Tu Z.J."/>
            <person name="Loftus B.J."/>
            <person name="Xi Z."/>
            <person name="Megy K."/>
            <person name="Grabherr M."/>
            <person name="Ren Q."/>
            <person name="Zdobnov E.M."/>
            <person name="Lobo N.F."/>
            <person name="Campbell K.S."/>
            <person name="Brown S.E."/>
            <person name="Bonaldo M.F."/>
            <person name="Zhu J."/>
            <person name="Sinkins S.P."/>
            <person name="Hogenkamp D.G."/>
            <person name="Amedeo P."/>
            <person name="Arensburger P."/>
            <person name="Atkinson P.W."/>
            <person name="Bidwell S.L."/>
            <person name="Biedler J."/>
            <person name="Birney E."/>
            <person name="Bruggner R.V."/>
            <person name="Costas J."/>
            <person name="Coy M.R."/>
            <person name="Crabtree J."/>
            <person name="Crawford M."/>
            <person name="DeBruyn B."/>
            <person name="DeCaprio D."/>
            <person name="Eiglmeier K."/>
            <person name="Eisenstadt E."/>
            <person name="El-Dorry H."/>
            <person name="Gelbart W.M."/>
            <person name="Gomes S.L."/>
            <person name="Hammond M."/>
            <person name="Hannick L.I."/>
            <person name="Hogan J.R."/>
            <person name="Holmes M.H."/>
            <person name="Jaffe D."/>
            <person name="Johnston S.J."/>
            <person name="Kennedy R.C."/>
            <person name="Koo H."/>
            <person name="Kravitz S."/>
            <person name="Kriventseva E.V."/>
            <person name="Kulp D."/>
            <person name="Labutti K."/>
            <person name="Lee E."/>
            <person name="Li S."/>
            <person name="Lovin D.D."/>
            <person name="Mao C."/>
            <person name="Mauceli E."/>
            <person name="Menck C.F."/>
            <person name="Miller J.R."/>
            <person name="Montgomery P."/>
            <person name="Mori A."/>
            <person name="Nascimento A.L."/>
            <person name="Naveira H.F."/>
            <person name="Nusbaum C."/>
            <person name="O'Leary S.B."/>
            <person name="Orvis J."/>
            <person name="Pertea M."/>
            <person name="Quesneville H."/>
            <person name="Reidenbach K.R."/>
            <person name="Rogers Y.-H.C."/>
            <person name="Roth C.W."/>
            <person name="Schneider J.R."/>
            <person name="Schatz M."/>
            <person name="Shumway M."/>
            <person name="Stanke M."/>
            <person name="Stinson E.O."/>
            <person name="Tubio J.M.C."/>
            <person name="Vanzee J.P."/>
            <person name="Verjovski-Almeida S."/>
            <person name="Werner D."/>
            <person name="White O.R."/>
            <person name="Wyder S."/>
            <person name="Zeng Q."/>
            <person name="Zhao Q."/>
            <person name="Zhao Y."/>
            <person name="Hill C.A."/>
            <person name="Raikhel A.S."/>
            <person name="Soares M.B."/>
            <person name="Knudson D.L."/>
            <person name="Lee N.H."/>
            <person name="Galagan J."/>
            <person name="Salzberg S.L."/>
            <person name="Paulsen I.T."/>
            <person name="Dimopoulos G."/>
            <person name="Collins F.H."/>
            <person name="Bruce B."/>
            <person name="Fraser-Liggett C.M."/>
            <person name="Severson D.W."/>
        </authorList>
    </citation>
    <scope>NUCLEOTIDE SEQUENCE [LARGE SCALE GENOMIC DNA]</scope>
    <source>
        <strain>LVPib12</strain>
    </source>
</reference>
<proteinExistence type="inferred from homology"/>
<keyword id="KW-1003">Cell membrane</keyword>
<keyword id="KW-0217">Developmental protein</keyword>
<keyword id="KW-0440">LIM domain</keyword>
<keyword id="KW-0472">Membrane</keyword>
<keyword id="KW-0479">Metal-binding</keyword>
<keyword id="KW-1185">Reference proteome</keyword>
<keyword id="KW-0677">Repeat</keyword>
<keyword id="KW-0862">Zinc</keyword>
<evidence type="ECO:0000250" key="1"/>
<evidence type="ECO:0000250" key="2">
    <source>
        <dbReference type="UniProtKB" id="A1Z6W3"/>
    </source>
</evidence>
<evidence type="ECO:0000255" key="3">
    <source>
        <dbReference type="PROSITE-ProRule" id="PRU00125"/>
    </source>
</evidence>
<evidence type="ECO:0000255" key="4">
    <source>
        <dbReference type="PROSITE-ProRule" id="PRU00636"/>
    </source>
</evidence>
<evidence type="ECO:0000256" key="5">
    <source>
        <dbReference type="SAM" id="MobiDB-lite"/>
    </source>
</evidence>
<evidence type="ECO:0000305" key="6"/>
<accession>Q174I2</accession>
<protein>
    <recommendedName>
        <fullName>Protein prickle</fullName>
    </recommendedName>
</protein>